<keyword id="KW-0968">Cytoplasmic vesicle</keyword>
<keyword id="KW-0278">Fertilization</keyword>
<keyword id="KW-0732">Signal</keyword>
<accession>P19448</accession>
<name>ELYS_HALCO</name>
<reference key="1">
    <citation type="journal article" date="1990" name="Proc. Natl. Acad. Sci. U.S.A.">
        <title>Species-specific sequences of abalone lysin, the sperm protein that creates a hole in the egg envelope.</title>
        <authorList>
            <person name="Vacquier V.D."/>
            <person name="Carner K.R."/>
            <person name="Stout C.D."/>
        </authorList>
    </citation>
    <scope>NUCLEOTIDE SEQUENCE [MRNA]</scope>
    <scope>FUNCTION</scope>
    <scope>TISSUE SPECIFICITY</scope>
</reference>
<reference key="2">
    <citation type="journal article" date="1997" name="Proc. Natl. Acad. Sci. U.S.A.">
        <title>The abalone egg vitelline envelope receptor for sperm lysin is a giant multivalent molecule.</title>
        <authorList>
            <person name="Swanson W.J."/>
            <person name="Vacquier V.D."/>
        </authorList>
    </citation>
    <scope>FUNCTION</scope>
    <scope>INTERACTION WITH VERL</scope>
    <scope>TISSUE SPECIFICITY</scope>
</reference>
<feature type="signal peptide">
    <location>
        <begin position="1"/>
        <end position="18"/>
    </location>
</feature>
<feature type="chain" id="PRO_0000021166" description="Egg-lysin">
    <location>
        <begin position="19"/>
        <end position="155"/>
    </location>
</feature>
<protein>
    <recommendedName>
        <fullName>Egg-lysin</fullName>
    </recommendedName>
    <alternativeName>
        <fullName>Sperm-lysin</fullName>
    </alternativeName>
</protein>
<organism>
    <name type="scientific">Haliotis corrugata</name>
    <name type="common">Pink abalone</name>
    <dbReference type="NCBI Taxonomy" id="6453"/>
    <lineage>
        <taxon>Eukaryota</taxon>
        <taxon>Metazoa</taxon>
        <taxon>Spiralia</taxon>
        <taxon>Lophotrochozoa</taxon>
        <taxon>Mollusca</taxon>
        <taxon>Gastropoda</taxon>
        <taxon>Vetigastropoda</taxon>
        <taxon>Lepetellida</taxon>
        <taxon>Haliotoidea</taxon>
        <taxon>Haliotidae</taxon>
        <taxon>Haliotis</taxon>
    </lineage>
</organism>
<comment type="function">
    <text evidence="1 2 3">Creates a 3 um hole in the egg vitelline layer through which the sperm passes (PubMed:2377618). Does not have enzyme activity. Species-specific interaction between the sperm protein lysin and the egg protein VERL exposes a basic surface on lysin that may dissociate the egg vitelline layer via electrostatic repulsion (By similarity). Plays a role in ensuring species-specific fertilization (PubMed:2377618, PubMed:9192632).</text>
</comment>
<comment type="subunit">
    <text evidence="1 2 3">Monomer. Homodimer. Molecules associate into dimers and then rapidly dissociate again (By similarity). Interacts (as a monomer) with the egg vitelline layer protein VERL (via VERL repeats); each VERL chain can bind multiple copies of lysin (PubMed:2377618, PubMed:9192632).</text>
</comment>
<comment type="subcellular location">
    <subcellularLocation>
        <location evidence="1">Cytoplasmic vesicle</location>
        <location evidence="1">Secretory vesicle</location>
        <location evidence="1">Acrosome lumen</location>
    </subcellularLocation>
</comment>
<comment type="tissue specificity">
    <text evidence="2 3">Sperm (at protein level).</text>
</comment>
<proteinExistence type="evidence at protein level"/>
<sequence>MKLLVLCLFAMMATLAVSRHRFRFIPHKYIRKEFEVALKVEIIAGFDRTLVKWLRVHGGRLSTVQKKALYFVNRRYMQTHWQNYMLWIVRKTDALGRPPVVADYSRLGAEIGRRIDMAYFYNFLNGRNMIPKYLPYMEEINRMRPADVPVANRGK</sequence>
<evidence type="ECO:0000250" key="1">
    <source>
        <dbReference type="UniProtKB" id="P04552"/>
    </source>
</evidence>
<evidence type="ECO:0000269" key="2">
    <source>
    </source>
</evidence>
<evidence type="ECO:0000269" key="3">
    <source>
    </source>
</evidence>
<dbReference type="EMBL" id="M34389">
    <property type="protein sequence ID" value="AAA29197.1"/>
    <property type="molecule type" value="mRNA"/>
</dbReference>
<dbReference type="PIR" id="B35960">
    <property type="entry name" value="B35960"/>
</dbReference>
<dbReference type="SMR" id="P19448"/>
<dbReference type="GO" id="GO:0043160">
    <property type="term" value="C:acrosomal lumen"/>
    <property type="evidence" value="ECO:0000250"/>
    <property type="project" value="UniProtKB"/>
</dbReference>
<dbReference type="GO" id="GO:0007338">
    <property type="term" value="P:single fertilization"/>
    <property type="evidence" value="ECO:0000250"/>
    <property type="project" value="UniProtKB"/>
</dbReference>
<dbReference type="CDD" id="cd00243">
    <property type="entry name" value="Lysin-Sp18"/>
    <property type="match status" value="1"/>
</dbReference>
<dbReference type="FunFam" id="1.20.150.10:FF:000001">
    <property type="entry name" value="Egg-lysin"/>
    <property type="match status" value="1"/>
</dbReference>
<dbReference type="Gene3D" id="1.20.150.10">
    <property type="entry name" value="Fertilization protein"/>
    <property type="match status" value="1"/>
</dbReference>
<dbReference type="InterPro" id="IPR001379">
    <property type="entry name" value="Egg_lysin"/>
</dbReference>
<dbReference type="InterPro" id="IPR035916">
    <property type="entry name" value="Egg_lysin_sf"/>
</dbReference>
<dbReference type="Pfam" id="PF01303">
    <property type="entry name" value="Egg_lysin"/>
    <property type="match status" value="1"/>
</dbReference>
<dbReference type="PRINTS" id="PR01882">
    <property type="entry name" value="LYSIN"/>
</dbReference>
<dbReference type="SUPFAM" id="SSF47082">
    <property type="entry name" value="Fertilization protein"/>
    <property type="match status" value="1"/>
</dbReference>